<name>LIPA_PAUCH</name>
<evidence type="ECO:0000255" key="1">
    <source>
        <dbReference type="HAMAP-Rule" id="MF_03123"/>
    </source>
</evidence>
<evidence type="ECO:0000255" key="2">
    <source>
        <dbReference type="PROSITE-ProRule" id="PRU01266"/>
    </source>
</evidence>
<gene>
    <name type="ordered locus">PCC_0559</name>
</gene>
<proteinExistence type="inferred from homology"/>
<protein>
    <recommendedName>
        <fullName evidence="1">Lipoyl synthase, organellar chromatophore</fullName>
        <ecNumber evidence="1">2.8.1.8</ecNumber>
    </recommendedName>
    <alternativeName>
        <fullName evidence="1">Lipoate synthase</fullName>
        <shortName evidence="1">LS</shortName>
        <shortName evidence="1">Lip-syn</shortName>
    </alternativeName>
    <alternativeName>
        <fullName evidence="1">Lipoic acid synthase</fullName>
    </alternativeName>
</protein>
<comment type="function">
    <text evidence="1">Catalyzes the radical-mediated insertion of two sulfur atoms into the C-6 and C-8 positions of the octanoyl moiety bound to the lipoyl domains of lipoate-dependent enzymes, thereby converting the octanoylated domains into lipoylated derivatives.</text>
</comment>
<comment type="catalytic activity">
    <reaction evidence="1">
        <text>[[Fe-S] cluster scaffold protein carrying a second [4Fe-4S](2+) cluster] + N(6)-octanoyl-L-lysyl-[protein] + 2 oxidized [2Fe-2S]-[ferredoxin] + 2 S-adenosyl-L-methionine + 4 H(+) = [[Fe-S] cluster scaffold protein] + N(6)-[(R)-dihydrolipoyl]-L-lysyl-[protein] + 4 Fe(3+) + 2 hydrogen sulfide + 2 5'-deoxyadenosine + 2 L-methionine + 2 reduced [2Fe-2S]-[ferredoxin]</text>
        <dbReference type="Rhea" id="RHEA:16585"/>
        <dbReference type="Rhea" id="RHEA-COMP:9928"/>
        <dbReference type="Rhea" id="RHEA-COMP:10000"/>
        <dbReference type="Rhea" id="RHEA-COMP:10001"/>
        <dbReference type="Rhea" id="RHEA-COMP:10475"/>
        <dbReference type="Rhea" id="RHEA-COMP:14568"/>
        <dbReference type="Rhea" id="RHEA-COMP:14569"/>
        <dbReference type="ChEBI" id="CHEBI:15378"/>
        <dbReference type="ChEBI" id="CHEBI:17319"/>
        <dbReference type="ChEBI" id="CHEBI:29034"/>
        <dbReference type="ChEBI" id="CHEBI:29919"/>
        <dbReference type="ChEBI" id="CHEBI:33722"/>
        <dbReference type="ChEBI" id="CHEBI:33737"/>
        <dbReference type="ChEBI" id="CHEBI:33738"/>
        <dbReference type="ChEBI" id="CHEBI:57844"/>
        <dbReference type="ChEBI" id="CHEBI:59789"/>
        <dbReference type="ChEBI" id="CHEBI:78809"/>
        <dbReference type="ChEBI" id="CHEBI:83100"/>
        <dbReference type="EC" id="2.8.1.8"/>
    </reaction>
</comment>
<comment type="cofactor">
    <cofactor evidence="1">
        <name>[4Fe-4S] cluster</name>
        <dbReference type="ChEBI" id="CHEBI:49883"/>
    </cofactor>
    <text evidence="1">Binds 2 [4Fe-4S] clusters per subunit. One cluster is coordinated with 3 cysteines and an exchangeable S-adenosyl-L-methionine.</text>
</comment>
<comment type="pathway">
    <text evidence="1">Protein modification; protein lipoylation via endogenous pathway; protein N(6)-(lipoyl)lysine from octanoyl-[acyl-carrier-protein]: step 2/2.</text>
</comment>
<comment type="subcellular location">
    <subcellularLocation>
        <location>Plastid</location>
        <location>Organellar chromatophore</location>
    </subcellularLocation>
</comment>
<comment type="similarity">
    <text evidence="1">Belongs to the radical SAM superfamily. Lipoyl synthase family.</text>
</comment>
<organism>
    <name type="scientific">Paulinella chromatophora</name>
    <dbReference type="NCBI Taxonomy" id="39717"/>
    <lineage>
        <taxon>Eukaryota</taxon>
        <taxon>Sar</taxon>
        <taxon>Rhizaria</taxon>
        <taxon>Cercozoa</taxon>
        <taxon>Imbricatea</taxon>
        <taxon>Silicofilosea</taxon>
        <taxon>Euglyphida</taxon>
        <taxon>Paulinellidae</taxon>
        <taxon>Paulinella</taxon>
    </lineage>
</organism>
<feature type="chain" id="PRO_0000398235" description="Lipoyl synthase, organellar chromatophore">
    <location>
        <begin position="1"/>
        <end position="291"/>
    </location>
</feature>
<feature type="domain" description="Radical SAM core" evidence="2">
    <location>
        <begin position="45"/>
        <end position="263"/>
    </location>
</feature>
<feature type="binding site" evidence="1">
    <location>
        <position position="33"/>
    </location>
    <ligand>
        <name>[4Fe-4S] cluster</name>
        <dbReference type="ChEBI" id="CHEBI:49883"/>
        <label>1</label>
    </ligand>
</feature>
<feature type="binding site" evidence="1">
    <location>
        <position position="38"/>
    </location>
    <ligand>
        <name>[4Fe-4S] cluster</name>
        <dbReference type="ChEBI" id="CHEBI:49883"/>
        <label>1</label>
    </ligand>
</feature>
<feature type="binding site" evidence="1">
    <location>
        <position position="44"/>
    </location>
    <ligand>
        <name>[4Fe-4S] cluster</name>
        <dbReference type="ChEBI" id="CHEBI:49883"/>
        <label>1</label>
    </ligand>
</feature>
<feature type="binding site" evidence="1">
    <location>
        <position position="59"/>
    </location>
    <ligand>
        <name>[4Fe-4S] cluster</name>
        <dbReference type="ChEBI" id="CHEBI:49883"/>
        <label>2</label>
        <note>4Fe-4S-S-AdoMet</note>
    </ligand>
</feature>
<feature type="binding site" evidence="1">
    <location>
        <position position="63"/>
    </location>
    <ligand>
        <name>[4Fe-4S] cluster</name>
        <dbReference type="ChEBI" id="CHEBI:49883"/>
        <label>2</label>
        <note>4Fe-4S-S-AdoMet</note>
    </ligand>
</feature>
<feature type="binding site" evidence="1">
    <location>
        <position position="66"/>
    </location>
    <ligand>
        <name>[4Fe-4S] cluster</name>
        <dbReference type="ChEBI" id="CHEBI:49883"/>
        <label>2</label>
        <note>4Fe-4S-S-AdoMet</note>
    </ligand>
</feature>
<feature type="binding site" evidence="1">
    <location>
        <position position="274"/>
    </location>
    <ligand>
        <name>[4Fe-4S] cluster</name>
        <dbReference type="ChEBI" id="CHEBI:49883"/>
        <label>1</label>
    </ligand>
</feature>
<keyword id="KW-0004">4Fe-4S</keyword>
<keyword id="KW-0408">Iron</keyword>
<keyword id="KW-0411">Iron-sulfur</keyword>
<keyword id="KW-0479">Metal-binding</keyword>
<keyword id="KW-0994">Organellar chromatophore</keyword>
<keyword id="KW-0934">Plastid</keyword>
<keyword id="KW-0949">S-adenosyl-L-methionine</keyword>
<keyword id="KW-0808">Transferase</keyword>
<geneLocation type="organellar chromatophore"/>
<dbReference type="EC" id="2.8.1.8" evidence="1"/>
<dbReference type="EMBL" id="CP000815">
    <property type="protein sequence ID" value="ACB42990.1"/>
    <property type="molecule type" value="Genomic_DNA"/>
</dbReference>
<dbReference type="SMR" id="B1X4X1"/>
<dbReference type="UniPathway" id="UPA00538">
    <property type="reaction ID" value="UER00593"/>
</dbReference>
<dbReference type="GO" id="GO:0070111">
    <property type="term" value="C:organellar chromatophore"/>
    <property type="evidence" value="ECO:0007669"/>
    <property type="project" value="UniProtKB-SubCell"/>
</dbReference>
<dbReference type="GO" id="GO:0009536">
    <property type="term" value="C:plastid"/>
    <property type="evidence" value="ECO:0007669"/>
    <property type="project" value="UniProtKB-KW"/>
</dbReference>
<dbReference type="GO" id="GO:0051539">
    <property type="term" value="F:4 iron, 4 sulfur cluster binding"/>
    <property type="evidence" value="ECO:0007669"/>
    <property type="project" value="UniProtKB-UniRule"/>
</dbReference>
<dbReference type="GO" id="GO:0016992">
    <property type="term" value="F:lipoate synthase activity"/>
    <property type="evidence" value="ECO:0007669"/>
    <property type="project" value="UniProtKB-UniRule"/>
</dbReference>
<dbReference type="GO" id="GO:0046872">
    <property type="term" value="F:metal ion binding"/>
    <property type="evidence" value="ECO:0007669"/>
    <property type="project" value="UniProtKB-KW"/>
</dbReference>
<dbReference type="CDD" id="cd01335">
    <property type="entry name" value="Radical_SAM"/>
    <property type="match status" value="1"/>
</dbReference>
<dbReference type="Gene3D" id="3.20.20.70">
    <property type="entry name" value="Aldolase class I"/>
    <property type="match status" value="1"/>
</dbReference>
<dbReference type="HAMAP" id="MF_00206">
    <property type="entry name" value="Lipoyl_synth"/>
    <property type="match status" value="1"/>
</dbReference>
<dbReference type="InterPro" id="IPR013785">
    <property type="entry name" value="Aldolase_TIM"/>
</dbReference>
<dbReference type="InterPro" id="IPR006638">
    <property type="entry name" value="Elp3/MiaA/NifB-like_rSAM"/>
</dbReference>
<dbReference type="InterPro" id="IPR003698">
    <property type="entry name" value="Lipoyl_synth"/>
</dbReference>
<dbReference type="InterPro" id="IPR007197">
    <property type="entry name" value="rSAM"/>
</dbReference>
<dbReference type="NCBIfam" id="TIGR00510">
    <property type="entry name" value="lipA"/>
    <property type="match status" value="1"/>
</dbReference>
<dbReference type="NCBIfam" id="NF004019">
    <property type="entry name" value="PRK05481.1"/>
    <property type="match status" value="1"/>
</dbReference>
<dbReference type="NCBIfam" id="NF009544">
    <property type="entry name" value="PRK12928.1"/>
    <property type="match status" value="1"/>
</dbReference>
<dbReference type="PANTHER" id="PTHR10949">
    <property type="entry name" value="LIPOYL SYNTHASE"/>
    <property type="match status" value="1"/>
</dbReference>
<dbReference type="PANTHER" id="PTHR10949:SF0">
    <property type="entry name" value="LIPOYL SYNTHASE, MITOCHONDRIAL"/>
    <property type="match status" value="1"/>
</dbReference>
<dbReference type="Pfam" id="PF04055">
    <property type="entry name" value="Radical_SAM"/>
    <property type="match status" value="1"/>
</dbReference>
<dbReference type="PIRSF" id="PIRSF005963">
    <property type="entry name" value="Lipoyl_synth"/>
    <property type="match status" value="1"/>
</dbReference>
<dbReference type="SFLD" id="SFLDF00271">
    <property type="entry name" value="lipoyl_synthase"/>
    <property type="match status" value="1"/>
</dbReference>
<dbReference type="SFLD" id="SFLDG01058">
    <property type="entry name" value="lipoyl_synthase_like"/>
    <property type="match status" value="1"/>
</dbReference>
<dbReference type="SMART" id="SM00729">
    <property type="entry name" value="Elp3"/>
    <property type="match status" value="1"/>
</dbReference>
<dbReference type="SUPFAM" id="SSF102114">
    <property type="entry name" value="Radical SAM enzymes"/>
    <property type="match status" value="1"/>
</dbReference>
<dbReference type="PROSITE" id="PS51918">
    <property type="entry name" value="RADICAL_SAM"/>
    <property type="match status" value="1"/>
</dbReference>
<accession>B1X4X1</accession>
<sequence length="291" mass="32395">MLKPTWLRVKAPQKERIGTINRLLTDLKLNTVCEEASCPNIGECFAGGTATFLIMGPGCTRACPYCDIDFDKSIRTVDHTEPTRIGEAVSRMRLKHVVITSVNRDDLADGGASHFVACIAAVRAASPTTTIEVLIPDFCGNLNSIDKVLAAKPEIINHNIETVPRIYNRVRPQGVYQRSLYLLDWIKSNDKNLYTKSGLMVGLGEIDAEVLEVMADLRAIQVDVVTIGQYLSPGSKHLPIDRFVTPTQFDNYKAIGELEMNFLQVVSTPLTRSSYHSGEFRNLMRDNPRQN</sequence>
<reference key="1">
    <citation type="journal article" date="2008" name="Curr. Biol.">
        <title>Chromatophore genome sequence of Paulinella sheds light on acquisition of photosynthesis by eukaryotes.</title>
        <authorList>
            <person name="Nowack E.C.M."/>
            <person name="Melkonian M."/>
            <person name="Gloeckner G."/>
        </authorList>
    </citation>
    <scope>NUCLEOTIDE SEQUENCE [LARGE SCALE GENOMIC DNA]</scope>
</reference>